<protein>
    <recommendedName>
        <fullName evidence="1">L-threonine 3-dehydrogenase</fullName>
        <shortName evidence="1">TDH</shortName>
        <ecNumber evidence="1">1.1.1.103</ecNumber>
    </recommendedName>
</protein>
<organism>
    <name type="scientific">Escherichia coli (strain K12 / MC4100 / BW2952)</name>
    <dbReference type="NCBI Taxonomy" id="595496"/>
    <lineage>
        <taxon>Bacteria</taxon>
        <taxon>Pseudomonadati</taxon>
        <taxon>Pseudomonadota</taxon>
        <taxon>Gammaproteobacteria</taxon>
        <taxon>Enterobacterales</taxon>
        <taxon>Enterobacteriaceae</taxon>
        <taxon>Escherichia</taxon>
    </lineage>
</organism>
<accession>C4ZXK8</accession>
<name>TDH_ECOBW</name>
<evidence type="ECO:0000255" key="1">
    <source>
        <dbReference type="HAMAP-Rule" id="MF_00627"/>
    </source>
</evidence>
<sequence>MKALSKLKAEEGIWMTDVPVPELGHNDLLIKIRKTAICGTDVHIYNWDEWSQKTIPVPMVVGHEYVGEVVGIGQEVKGFKIGDRVSGEGHITCGHCRNCRGGRTHLCRNTIGVGVNRPGCFAEYLVIPAFNAFKIPDNISDDLAAIFDPFGNAVHTALSFDLVGEDVLVSGAGPIGIMAAAVAKHVGARNVVITDVNEYRLELARKMGITRAVNVAKENLNDVMAELGMTEGFDVGLEMSGAPPAFRTMLDTMNHGGRIAMLGIPPSDMSIDWTKVIFKGLFIKGIYGREMFETWYKMAALIQSGLDLSPIITHRFSIDDFQKGFDAMRSGQSGKVILSWD</sequence>
<comment type="function">
    <text evidence="1">Catalyzes the NAD(+)-dependent oxidation of L-threonine to 2-amino-3-ketobutyrate.</text>
</comment>
<comment type="catalytic activity">
    <reaction evidence="1">
        <text>L-threonine + NAD(+) = (2S)-2-amino-3-oxobutanoate + NADH + H(+)</text>
        <dbReference type="Rhea" id="RHEA:13161"/>
        <dbReference type="ChEBI" id="CHEBI:15378"/>
        <dbReference type="ChEBI" id="CHEBI:57540"/>
        <dbReference type="ChEBI" id="CHEBI:57926"/>
        <dbReference type="ChEBI" id="CHEBI:57945"/>
        <dbReference type="ChEBI" id="CHEBI:78948"/>
        <dbReference type="EC" id="1.1.1.103"/>
    </reaction>
</comment>
<comment type="cofactor">
    <cofactor evidence="1">
        <name>Zn(2+)</name>
        <dbReference type="ChEBI" id="CHEBI:29105"/>
    </cofactor>
    <text evidence="1">Binds 2 Zn(2+) ions per subunit.</text>
</comment>
<comment type="pathway">
    <text evidence="1">Amino-acid degradation; L-threonine degradation via oxydo-reductase pathway; glycine from L-threonine: step 1/2.</text>
</comment>
<comment type="subunit">
    <text evidence="1">Homotetramer.</text>
</comment>
<comment type="subcellular location">
    <subcellularLocation>
        <location evidence="1">Cytoplasm</location>
    </subcellularLocation>
</comment>
<comment type="similarity">
    <text evidence="1">Belongs to the zinc-containing alcohol dehydrogenase family.</text>
</comment>
<feature type="chain" id="PRO_1000212311" description="L-threonine 3-dehydrogenase">
    <location>
        <begin position="1"/>
        <end position="341"/>
    </location>
</feature>
<feature type="active site" description="Charge relay system" evidence="1">
    <location>
        <position position="40"/>
    </location>
</feature>
<feature type="active site" description="Charge relay system" evidence="1">
    <location>
        <position position="43"/>
    </location>
</feature>
<feature type="binding site" evidence="1">
    <location>
        <position position="38"/>
    </location>
    <ligand>
        <name>Zn(2+)</name>
        <dbReference type="ChEBI" id="CHEBI:29105"/>
        <label>1</label>
        <note>catalytic</note>
    </ligand>
</feature>
<feature type="binding site" evidence="1">
    <location>
        <position position="63"/>
    </location>
    <ligand>
        <name>Zn(2+)</name>
        <dbReference type="ChEBI" id="CHEBI:29105"/>
        <label>1</label>
        <note>catalytic</note>
    </ligand>
</feature>
<feature type="binding site" evidence="1">
    <location>
        <position position="64"/>
    </location>
    <ligand>
        <name>Zn(2+)</name>
        <dbReference type="ChEBI" id="CHEBI:29105"/>
        <label>1</label>
        <note>catalytic</note>
    </ligand>
</feature>
<feature type="binding site" evidence="1">
    <location>
        <position position="93"/>
    </location>
    <ligand>
        <name>Zn(2+)</name>
        <dbReference type="ChEBI" id="CHEBI:29105"/>
        <label>2</label>
    </ligand>
</feature>
<feature type="binding site" evidence="1">
    <location>
        <position position="96"/>
    </location>
    <ligand>
        <name>Zn(2+)</name>
        <dbReference type="ChEBI" id="CHEBI:29105"/>
        <label>2</label>
    </ligand>
</feature>
<feature type="binding site" evidence="1">
    <location>
        <position position="99"/>
    </location>
    <ligand>
        <name>Zn(2+)</name>
        <dbReference type="ChEBI" id="CHEBI:29105"/>
        <label>2</label>
    </ligand>
</feature>
<feature type="binding site" evidence="1">
    <location>
        <position position="107"/>
    </location>
    <ligand>
        <name>Zn(2+)</name>
        <dbReference type="ChEBI" id="CHEBI:29105"/>
        <label>2</label>
    </ligand>
</feature>
<feature type="binding site" evidence="1">
    <location>
        <position position="175"/>
    </location>
    <ligand>
        <name>NAD(+)</name>
        <dbReference type="ChEBI" id="CHEBI:57540"/>
    </ligand>
</feature>
<feature type="binding site" evidence="1">
    <location>
        <position position="195"/>
    </location>
    <ligand>
        <name>NAD(+)</name>
        <dbReference type="ChEBI" id="CHEBI:57540"/>
    </ligand>
</feature>
<feature type="binding site" evidence="1">
    <location>
        <position position="200"/>
    </location>
    <ligand>
        <name>NAD(+)</name>
        <dbReference type="ChEBI" id="CHEBI:57540"/>
    </ligand>
</feature>
<feature type="binding site" evidence="1">
    <location>
        <begin position="262"/>
        <end position="264"/>
    </location>
    <ligand>
        <name>NAD(+)</name>
        <dbReference type="ChEBI" id="CHEBI:57540"/>
    </ligand>
</feature>
<feature type="binding site" evidence="1">
    <location>
        <begin position="286"/>
        <end position="287"/>
    </location>
    <ligand>
        <name>NAD(+)</name>
        <dbReference type="ChEBI" id="CHEBI:57540"/>
    </ligand>
</feature>
<feature type="site" description="Important for catalytic activity for the proton relay mechanism but does not participate directly in the coordination of zinc atom" evidence="1">
    <location>
        <position position="148"/>
    </location>
</feature>
<proteinExistence type="inferred from homology"/>
<dbReference type="EC" id="1.1.1.103" evidence="1"/>
<dbReference type="EMBL" id="CP001396">
    <property type="protein sequence ID" value="ACR65650.1"/>
    <property type="molecule type" value="Genomic_DNA"/>
</dbReference>
<dbReference type="RefSeq" id="WP_000646007.1">
    <property type="nucleotide sequence ID" value="NC_012759.1"/>
</dbReference>
<dbReference type="SMR" id="C4ZXK8"/>
<dbReference type="KEGG" id="ebw:BWG_3307"/>
<dbReference type="HOGENOM" id="CLU_026673_11_0_6"/>
<dbReference type="UniPathway" id="UPA00046">
    <property type="reaction ID" value="UER00505"/>
</dbReference>
<dbReference type="GO" id="GO:0005737">
    <property type="term" value="C:cytoplasm"/>
    <property type="evidence" value="ECO:0007669"/>
    <property type="project" value="UniProtKB-SubCell"/>
</dbReference>
<dbReference type="GO" id="GO:0008743">
    <property type="term" value="F:L-threonine 3-dehydrogenase activity"/>
    <property type="evidence" value="ECO:0007669"/>
    <property type="project" value="UniProtKB-UniRule"/>
</dbReference>
<dbReference type="GO" id="GO:0008270">
    <property type="term" value="F:zinc ion binding"/>
    <property type="evidence" value="ECO:0007669"/>
    <property type="project" value="UniProtKB-UniRule"/>
</dbReference>
<dbReference type="GO" id="GO:0019518">
    <property type="term" value="P:L-threonine catabolic process to glycine"/>
    <property type="evidence" value="ECO:0007669"/>
    <property type="project" value="UniProtKB-UniPathway"/>
</dbReference>
<dbReference type="FunFam" id="3.40.50.720:FF:000059">
    <property type="entry name" value="L-threonine 3-dehydrogenase"/>
    <property type="match status" value="1"/>
</dbReference>
<dbReference type="Gene3D" id="3.90.180.10">
    <property type="entry name" value="Medium-chain alcohol dehydrogenases, catalytic domain"/>
    <property type="match status" value="1"/>
</dbReference>
<dbReference type="Gene3D" id="3.40.50.720">
    <property type="entry name" value="NAD(P)-binding Rossmann-like Domain"/>
    <property type="match status" value="1"/>
</dbReference>
<dbReference type="HAMAP" id="MF_00627">
    <property type="entry name" value="Thr_dehydrog"/>
    <property type="match status" value="1"/>
</dbReference>
<dbReference type="InterPro" id="IPR013149">
    <property type="entry name" value="ADH-like_C"/>
</dbReference>
<dbReference type="InterPro" id="IPR013154">
    <property type="entry name" value="ADH-like_N"/>
</dbReference>
<dbReference type="InterPro" id="IPR002328">
    <property type="entry name" value="ADH_Zn_CS"/>
</dbReference>
<dbReference type="InterPro" id="IPR011032">
    <property type="entry name" value="GroES-like_sf"/>
</dbReference>
<dbReference type="InterPro" id="IPR004627">
    <property type="entry name" value="L-Threonine_3-DHase"/>
</dbReference>
<dbReference type="InterPro" id="IPR036291">
    <property type="entry name" value="NAD(P)-bd_dom_sf"/>
</dbReference>
<dbReference type="InterPro" id="IPR020843">
    <property type="entry name" value="PKS_ER"/>
</dbReference>
<dbReference type="InterPro" id="IPR050129">
    <property type="entry name" value="Zn_alcohol_dh"/>
</dbReference>
<dbReference type="NCBIfam" id="NF003808">
    <property type="entry name" value="PRK05396.1"/>
    <property type="match status" value="1"/>
</dbReference>
<dbReference type="NCBIfam" id="TIGR00692">
    <property type="entry name" value="tdh"/>
    <property type="match status" value="1"/>
</dbReference>
<dbReference type="PANTHER" id="PTHR43401">
    <property type="entry name" value="L-THREONINE 3-DEHYDROGENASE"/>
    <property type="match status" value="1"/>
</dbReference>
<dbReference type="PANTHER" id="PTHR43401:SF2">
    <property type="entry name" value="L-THREONINE 3-DEHYDROGENASE"/>
    <property type="match status" value="1"/>
</dbReference>
<dbReference type="Pfam" id="PF08240">
    <property type="entry name" value="ADH_N"/>
    <property type="match status" value="1"/>
</dbReference>
<dbReference type="Pfam" id="PF00107">
    <property type="entry name" value="ADH_zinc_N"/>
    <property type="match status" value="1"/>
</dbReference>
<dbReference type="SMART" id="SM00829">
    <property type="entry name" value="PKS_ER"/>
    <property type="match status" value="1"/>
</dbReference>
<dbReference type="SUPFAM" id="SSF50129">
    <property type="entry name" value="GroES-like"/>
    <property type="match status" value="1"/>
</dbReference>
<dbReference type="SUPFAM" id="SSF51735">
    <property type="entry name" value="NAD(P)-binding Rossmann-fold domains"/>
    <property type="match status" value="1"/>
</dbReference>
<dbReference type="PROSITE" id="PS00059">
    <property type="entry name" value="ADH_ZINC"/>
    <property type="match status" value="1"/>
</dbReference>
<keyword id="KW-0963">Cytoplasm</keyword>
<keyword id="KW-0479">Metal-binding</keyword>
<keyword id="KW-0520">NAD</keyword>
<keyword id="KW-0560">Oxidoreductase</keyword>
<keyword id="KW-0862">Zinc</keyword>
<gene>
    <name evidence="1" type="primary">tdh</name>
    <name type="ordered locus">BWG_3307</name>
</gene>
<reference key="1">
    <citation type="journal article" date="2009" name="J. Bacteriol.">
        <title>Genomic sequencing reveals regulatory mutations and recombinational events in the widely used MC4100 lineage of Escherichia coli K-12.</title>
        <authorList>
            <person name="Ferenci T."/>
            <person name="Zhou Z."/>
            <person name="Betteridge T."/>
            <person name="Ren Y."/>
            <person name="Liu Y."/>
            <person name="Feng L."/>
            <person name="Reeves P.R."/>
            <person name="Wang L."/>
        </authorList>
    </citation>
    <scope>NUCLEOTIDE SEQUENCE [LARGE SCALE GENOMIC DNA]</scope>
    <source>
        <strain>K12 / MC4100 / BW2952</strain>
    </source>
</reference>